<reference key="1">
    <citation type="journal article" date="2001" name="Nature">
        <title>Massive gene decay in the leprosy bacillus.</title>
        <authorList>
            <person name="Cole S.T."/>
            <person name="Eiglmeier K."/>
            <person name="Parkhill J."/>
            <person name="James K.D."/>
            <person name="Thomson N.R."/>
            <person name="Wheeler P.R."/>
            <person name="Honore N."/>
            <person name="Garnier T."/>
            <person name="Churcher C.M."/>
            <person name="Harris D.E."/>
            <person name="Mungall K.L."/>
            <person name="Basham D."/>
            <person name="Brown D."/>
            <person name="Chillingworth T."/>
            <person name="Connor R."/>
            <person name="Davies R.M."/>
            <person name="Devlin K."/>
            <person name="Duthoy S."/>
            <person name="Feltwell T."/>
            <person name="Fraser A."/>
            <person name="Hamlin N."/>
            <person name="Holroyd S."/>
            <person name="Hornsby T."/>
            <person name="Jagels K."/>
            <person name="Lacroix C."/>
            <person name="Maclean J."/>
            <person name="Moule S."/>
            <person name="Murphy L.D."/>
            <person name="Oliver K."/>
            <person name="Quail M.A."/>
            <person name="Rajandream M.A."/>
            <person name="Rutherford K.M."/>
            <person name="Rutter S."/>
            <person name="Seeger K."/>
            <person name="Simon S."/>
            <person name="Simmonds M."/>
            <person name="Skelton J."/>
            <person name="Squares R."/>
            <person name="Squares S."/>
            <person name="Stevens K."/>
            <person name="Taylor K."/>
            <person name="Whitehead S."/>
            <person name="Woodward J.R."/>
            <person name="Barrell B.G."/>
        </authorList>
    </citation>
    <scope>NUCLEOTIDE SEQUENCE [LARGE SCALE GENOMIC DNA]</scope>
    <source>
        <strain>TN</strain>
    </source>
</reference>
<accession>O33000</accession>
<feature type="chain" id="PRO_0000131549" description="Small ribosomal subunit protein uS5">
    <location>
        <begin position="1"/>
        <end position="217"/>
    </location>
</feature>
<feature type="domain" description="S5 DRBM" evidence="1">
    <location>
        <begin position="38"/>
        <end position="101"/>
    </location>
</feature>
<feature type="region of interest" description="Disordered" evidence="2">
    <location>
        <begin position="1"/>
        <end position="33"/>
    </location>
</feature>
<feature type="region of interest" description="Disordered" evidence="2">
    <location>
        <begin position="185"/>
        <end position="217"/>
    </location>
</feature>
<feature type="compositionally biased region" description="Basic and acidic residues" evidence="2">
    <location>
        <begin position="11"/>
        <end position="33"/>
    </location>
</feature>
<feature type="compositionally biased region" description="Basic and acidic residues" evidence="2">
    <location>
        <begin position="204"/>
        <end position="217"/>
    </location>
</feature>
<proteinExistence type="inferred from homology"/>
<evidence type="ECO:0000255" key="1">
    <source>
        <dbReference type="HAMAP-Rule" id="MF_01307"/>
    </source>
</evidence>
<evidence type="ECO:0000256" key="2">
    <source>
        <dbReference type="SAM" id="MobiDB-lite"/>
    </source>
</evidence>
<evidence type="ECO:0000305" key="3"/>
<keyword id="KW-1185">Reference proteome</keyword>
<keyword id="KW-0687">Ribonucleoprotein</keyword>
<keyword id="KW-0689">Ribosomal protein</keyword>
<keyword id="KW-0694">RNA-binding</keyword>
<keyword id="KW-0699">rRNA-binding</keyword>
<gene>
    <name evidence="1" type="primary">rpsE</name>
    <name type="ordered locus">ML1842</name>
    <name type="ORF">MLCB2492.21</name>
</gene>
<comment type="function">
    <text evidence="1">With S4 and S12 plays an important role in translational accuracy.</text>
</comment>
<comment type="function">
    <text evidence="1">Located at the back of the 30S subunit body where it stabilizes the conformation of the head with respect to the body.</text>
</comment>
<comment type="subunit">
    <text evidence="1">Part of the 30S ribosomal subunit. Contacts proteins S4 and S8.</text>
</comment>
<comment type="domain">
    <text>The N-terminal domain interacts with the head of the 30S subunit; the C-terminal domain interacts with the body and contacts protein S4. The interaction surface between S4 and S5 is involved in control of translational fidelity.</text>
</comment>
<comment type="similarity">
    <text evidence="1">Belongs to the universal ribosomal protein uS5 family.</text>
</comment>
<sequence>MAAQSAGLLGDSREGRSRREGGSRGGRDRDRDGEKGNYLERVVAINRVSKVVKGGRRFSFTALVIVGDGHGMVGVGYGKAKEVPAAIAKGVEEARKSFFRVPLIDGTITHPVQGEAAAGVVLLRPASPGTGVIAGGAVRAVLECAGVHDILAKSLGSDNAINVVHATVAALKLLQRPDEVAARRGLRSGMLPRSWDPAGVAGERSVDRPVGRVREQA</sequence>
<organism>
    <name type="scientific">Mycobacterium leprae (strain TN)</name>
    <dbReference type="NCBI Taxonomy" id="272631"/>
    <lineage>
        <taxon>Bacteria</taxon>
        <taxon>Bacillati</taxon>
        <taxon>Actinomycetota</taxon>
        <taxon>Actinomycetes</taxon>
        <taxon>Mycobacteriales</taxon>
        <taxon>Mycobacteriaceae</taxon>
        <taxon>Mycobacterium</taxon>
    </lineage>
</organism>
<dbReference type="EMBL" id="Z98756">
    <property type="protein sequence ID" value="CAB11453.1"/>
    <property type="molecule type" value="Genomic_DNA"/>
</dbReference>
<dbReference type="EMBL" id="AL583923">
    <property type="protein sequence ID" value="CAC30796.1"/>
    <property type="molecule type" value="Genomic_DNA"/>
</dbReference>
<dbReference type="PIR" id="T45383">
    <property type="entry name" value="T45383"/>
</dbReference>
<dbReference type="RefSeq" id="NP_302248.1">
    <property type="nucleotide sequence ID" value="NC_002677.1"/>
</dbReference>
<dbReference type="RefSeq" id="WP_010908569.1">
    <property type="nucleotide sequence ID" value="NC_002677.1"/>
</dbReference>
<dbReference type="SMR" id="O33000"/>
<dbReference type="STRING" id="272631.gene:17575690"/>
<dbReference type="KEGG" id="mle:ML1842"/>
<dbReference type="PATRIC" id="fig|272631.5.peg.3492"/>
<dbReference type="Leproma" id="ML1842"/>
<dbReference type="eggNOG" id="COG0098">
    <property type="taxonomic scope" value="Bacteria"/>
</dbReference>
<dbReference type="HOGENOM" id="CLU_065898_1_2_11"/>
<dbReference type="OrthoDB" id="9809045at2"/>
<dbReference type="Proteomes" id="UP000000806">
    <property type="component" value="Chromosome"/>
</dbReference>
<dbReference type="GO" id="GO:0015935">
    <property type="term" value="C:small ribosomal subunit"/>
    <property type="evidence" value="ECO:0007669"/>
    <property type="project" value="InterPro"/>
</dbReference>
<dbReference type="GO" id="GO:0019843">
    <property type="term" value="F:rRNA binding"/>
    <property type="evidence" value="ECO:0007669"/>
    <property type="project" value="UniProtKB-UniRule"/>
</dbReference>
<dbReference type="GO" id="GO:0003735">
    <property type="term" value="F:structural constituent of ribosome"/>
    <property type="evidence" value="ECO:0007669"/>
    <property type="project" value="InterPro"/>
</dbReference>
<dbReference type="GO" id="GO:0006412">
    <property type="term" value="P:translation"/>
    <property type="evidence" value="ECO:0007669"/>
    <property type="project" value="UniProtKB-UniRule"/>
</dbReference>
<dbReference type="FunFam" id="3.30.160.20:FF:000001">
    <property type="entry name" value="30S ribosomal protein S5"/>
    <property type="match status" value="1"/>
</dbReference>
<dbReference type="FunFam" id="3.30.230.10:FF:000002">
    <property type="entry name" value="30S ribosomal protein S5"/>
    <property type="match status" value="1"/>
</dbReference>
<dbReference type="Gene3D" id="3.30.160.20">
    <property type="match status" value="1"/>
</dbReference>
<dbReference type="Gene3D" id="3.30.230.10">
    <property type="match status" value="1"/>
</dbReference>
<dbReference type="HAMAP" id="MF_01307_B">
    <property type="entry name" value="Ribosomal_uS5_B"/>
    <property type="match status" value="1"/>
</dbReference>
<dbReference type="InterPro" id="IPR020568">
    <property type="entry name" value="Ribosomal_Su5_D2-typ_SF"/>
</dbReference>
<dbReference type="InterPro" id="IPR000851">
    <property type="entry name" value="Ribosomal_uS5"/>
</dbReference>
<dbReference type="InterPro" id="IPR005712">
    <property type="entry name" value="Ribosomal_uS5_bac-type"/>
</dbReference>
<dbReference type="InterPro" id="IPR005324">
    <property type="entry name" value="Ribosomal_uS5_C"/>
</dbReference>
<dbReference type="InterPro" id="IPR013810">
    <property type="entry name" value="Ribosomal_uS5_N"/>
</dbReference>
<dbReference type="InterPro" id="IPR018192">
    <property type="entry name" value="Ribosomal_uS5_N_CS"/>
</dbReference>
<dbReference type="InterPro" id="IPR014721">
    <property type="entry name" value="Ribsml_uS5_D2-typ_fold_subgr"/>
</dbReference>
<dbReference type="NCBIfam" id="TIGR01021">
    <property type="entry name" value="rpsE_bact"/>
    <property type="match status" value="1"/>
</dbReference>
<dbReference type="PANTHER" id="PTHR48277">
    <property type="entry name" value="MITOCHONDRIAL RIBOSOMAL PROTEIN S5"/>
    <property type="match status" value="1"/>
</dbReference>
<dbReference type="PANTHER" id="PTHR48277:SF1">
    <property type="entry name" value="MITOCHONDRIAL RIBOSOMAL PROTEIN S5"/>
    <property type="match status" value="1"/>
</dbReference>
<dbReference type="Pfam" id="PF00333">
    <property type="entry name" value="Ribosomal_S5"/>
    <property type="match status" value="1"/>
</dbReference>
<dbReference type="Pfam" id="PF03719">
    <property type="entry name" value="Ribosomal_S5_C"/>
    <property type="match status" value="1"/>
</dbReference>
<dbReference type="SUPFAM" id="SSF54768">
    <property type="entry name" value="dsRNA-binding domain-like"/>
    <property type="match status" value="1"/>
</dbReference>
<dbReference type="SUPFAM" id="SSF54211">
    <property type="entry name" value="Ribosomal protein S5 domain 2-like"/>
    <property type="match status" value="1"/>
</dbReference>
<dbReference type="PROSITE" id="PS00585">
    <property type="entry name" value="RIBOSOMAL_S5"/>
    <property type="match status" value="1"/>
</dbReference>
<dbReference type="PROSITE" id="PS50881">
    <property type="entry name" value="S5_DSRBD"/>
    <property type="match status" value="1"/>
</dbReference>
<protein>
    <recommendedName>
        <fullName evidence="1">Small ribosomal subunit protein uS5</fullName>
    </recommendedName>
    <alternativeName>
        <fullName evidence="3">30S ribosomal protein S5</fullName>
    </alternativeName>
</protein>
<name>RS5_MYCLE</name>